<organism>
    <name type="scientific">Parvibaculum lavamentivorans (strain DS-1 / DSM 13023 / NCIMB 13966)</name>
    <dbReference type="NCBI Taxonomy" id="402881"/>
    <lineage>
        <taxon>Bacteria</taxon>
        <taxon>Pseudomonadati</taxon>
        <taxon>Pseudomonadota</taxon>
        <taxon>Alphaproteobacteria</taxon>
        <taxon>Hyphomicrobiales</taxon>
        <taxon>Parvibaculaceae</taxon>
        <taxon>Parvibaculum</taxon>
    </lineage>
</organism>
<gene>
    <name evidence="1" type="primary">rplC</name>
    <name type="ordered locus">Plav_2736</name>
</gene>
<keyword id="KW-0488">Methylation</keyword>
<keyword id="KW-1185">Reference proteome</keyword>
<keyword id="KW-0687">Ribonucleoprotein</keyword>
<keyword id="KW-0689">Ribosomal protein</keyword>
<keyword id="KW-0694">RNA-binding</keyword>
<keyword id="KW-0699">rRNA-binding</keyword>
<feature type="chain" id="PRO_1000073253" description="Large ribosomal subunit protein uL3">
    <location>
        <begin position="1"/>
        <end position="251"/>
    </location>
</feature>
<feature type="region of interest" description="Disordered" evidence="2">
    <location>
        <begin position="219"/>
        <end position="251"/>
    </location>
</feature>
<feature type="compositionally biased region" description="Low complexity" evidence="2">
    <location>
        <begin position="228"/>
        <end position="241"/>
    </location>
</feature>
<feature type="compositionally biased region" description="Acidic residues" evidence="2">
    <location>
        <begin position="242"/>
        <end position="251"/>
    </location>
</feature>
<feature type="modified residue" description="N5-methylglutamine" evidence="1">
    <location>
        <position position="151"/>
    </location>
</feature>
<evidence type="ECO:0000255" key="1">
    <source>
        <dbReference type="HAMAP-Rule" id="MF_01325"/>
    </source>
</evidence>
<evidence type="ECO:0000256" key="2">
    <source>
        <dbReference type="SAM" id="MobiDB-lite"/>
    </source>
</evidence>
<evidence type="ECO:0000305" key="3"/>
<comment type="function">
    <text evidence="1">One of the primary rRNA binding proteins, it binds directly near the 3'-end of the 23S rRNA, where it nucleates assembly of the 50S subunit.</text>
</comment>
<comment type="subunit">
    <text evidence="1">Part of the 50S ribosomal subunit. Forms a cluster with proteins L14 and L19.</text>
</comment>
<comment type="PTM">
    <text evidence="1">Methylated by PrmB.</text>
</comment>
<comment type="similarity">
    <text evidence="1">Belongs to the universal ribosomal protein uL3 family.</text>
</comment>
<protein>
    <recommendedName>
        <fullName evidence="1">Large ribosomal subunit protein uL3</fullName>
    </recommendedName>
    <alternativeName>
        <fullName evidence="3">50S ribosomal protein L3</fullName>
    </alternativeName>
</protein>
<reference key="1">
    <citation type="journal article" date="2011" name="Stand. Genomic Sci.">
        <title>Complete genome sequence of Parvibaculum lavamentivorans type strain (DS-1(T)).</title>
        <authorList>
            <person name="Schleheck D."/>
            <person name="Weiss M."/>
            <person name="Pitluck S."/>
            <person name="Bruce D."/>
            <person name="Land M.L."/>
            <person name="Han S."/>
            <person name="Saunders E."/>
            <person name="Tapia R."/>
            <person name="Detter C."/>
            <person name="Brettin T."/>
            <person name="Han J."/>
            <person name="Woyke T."/>
            <person name="Goodwin L."/>
            <person name="Pennacchio L."/>
            <person name="Nolan M."/>
            <person name="Cook A.M."/>
            <person name="Kjelleberg S."/>
            <person name="Thomas T."/>
        </authorList>
    </citation>
    <scope>NUCLEOTIDE SEQUENCE [LARGE SCALE GENOMIC DNA]</scope>
    <source>
        <strain>DS-1 / DSM 13023 / NCIMB 13966</strain>
    </source>
</reference>
<sequence>MRSGVIVKKVGMTRLFMEDGRHVPVTVLKLDNCQVVSQRTDEKNGYTAVQLGTGRAKAKNVANAQRGQFARASVEPKLELVEFRVSPDNLLDVGVEITADHFIAGQYVDVSGTSIGKGFAGVMKRHNFGGLRATHGVSVSHRSHGSTGQNQDPGKVFKGKKMAGHMGATRVTTQNLEVVRTDADKGLIMVKGAVPGSKGGWVLVRDAVKTKLPEGVPVPGAFRRNGEEAAAAPAAEAPAETPAEEAGQEGA</sequence>
<dbReference type="EMBL" id="CP000774">
    <property type="protein sequence ID" value="ABS64344.1"/>
    <property type="molecule type" value="Genomic_DNA"/>
</dbReference>
<dbReference type="RefSeq" id="WP_012111658.1">
    <property type="nucleotide sequence ID" value="NC_009719.1"/>
</dbReference>
<dbReference type="SMR" id="A7HWR1"/>
<dbReference type="STRING" id="402881.Plav_2736"/>
<dbReference type="KEGG" id="pla:Plav_2736"/>
<dbReference type="eggNOG" id="COG0087">
    <property type="taxonomic scope" value="Bacteria"/>
</dbReference>
<dbReference type="HOGENOM" id="CLU_044142_2_0_5"/>
<dbReference type="OrthoDB" id="9806135at2"/>
<dbReference type="Proteomes" id="UP000006377">
    <property type="component" value="Chromosome"/>
</dbReference>
<dbReference type="GO" id="GO:0022625">
    <property type="term" value="C:cytosolic large ribosomal subunit"/>
    <property type="evidence" value="ECO:0007669"/>
    <property type="project" value="TreeGrafter"/>
</dbReference>
<dbReference type="GO" id="GO:0019843">
    <property type="term" value="F:rRNA binding"/>
    <property type="evidence" value="ECO:0007669"/>
    <property type="project" value="UniProtKB-UniRule"/>
</dbReference>
<dbReference type="GO" id="GO:0003735">
    <property type="term" value="F:structural constituent of ribosome"/>
    <property type="evidence" value="ECO:0007669"/>
    <property type="project" value="InterPro"/>
</dbReference>
<dbReference type="GO" id="GO:0006412">
    <property type="term" value="P:translation"/>
    <property type="evidence" value="ECO:0007669"/>
    <property type="project" value="UniProtKB-UniRule"/>
</dbReference>
<dbReference type="FunFam" id="2.40.30.10:FF:000004">
    <property type="entry name" value="50S ribosomal protein L3"/>
    <property type="match status" value="1"/>
</dbReference>
<dbReference type="FunFam" id="3.30.160.810:FF:000001">
    <property type="entry name" value="50S ribosomal protein L3"/>
    <property type="match status" value="1"/>
</dbReference>
<dbReference type="Gene3D" id="3.30.160.810">
    <property type="match status" value="1"/>
</dbReference>
<dbReference type="Gene3D" id="2.40.30.10">
    <property type="entry name" value="Translation factors"/>
    <property type="match status" value="1"/>
</dbReference>
<dbReference type="HAMAP" id="MF_01325_B">
    <property type="entry name" value="Ribosomal_uL3_B"/>
    <property type="match status" value="1"/>
</dbReference>
<dbReference type="InterPro" id="IPR000597">
    <property type="entry name" value="Ribosomal_uL3"/>
</dbReference>
<dbReference type="InterPro" id="IPR019927">
    <property type="entry name" value="Ribosomal_uL3_bac/org-type"/>
</dbReference>
<dbReference type="InterPro" id="IPR019926">
    <property type="entry name" value="Ribosomal_uL3_CS"/>
</dbReference>
<dbReference type="InterPro" id="IPR009000">
    <property type="entry name" value="Transl_B-barrel_sf"/>
</dbReference>
<dbReference type="NCBIfam" id="TIGR03625">
    <property type="entry name" value="L3_bact"/>
    <property type="match status" value="1"/>
</dbReference>
<dbReference type="PANTHER" id="PTHR11229">
    <property type="entry name" value="50S RIBOSOMAL PROTEIN L3"/>
    <property type="match status" value="1"/>
</dbReference>
<dbReference type="PANTHER" id="PTHR11229:SF16">
    <property type="entry name" value="LARGE RIBOSOMAL SUBUNIT PROTEIN UL3C"/>
    <property type="match status" value="1"/>
</dbReference>
<dbReference type="Pfam" id="PF00297">
    <property type="entry name" value="Ribosomal_L3"/>
    <property type="match status" value="1"/>
</dbReference>
<dbReference type="SUPFAM" id="SSF50447">
    <property type="entry name" value="Translation proteins"/>
    <property type="match status" value="1"/>
</dbReference>
<dbReference type="PROSITE" id="PS00474">
    <property type="entry name" value="RIBOSOMAL_L3"/>
    <property type="match status" value="1"/>
</dbReference>
<proteinExistence type="inferred from homology"/>
<accession>A7HWR1</accession>
<name>RL3_PARL1</name>